<comment type="function">
    <text evidence="1">N-acetylglutamate synthase involved in arginine biosynthesis.</text>
</comment>
<comment type="catalytic activity">
    <reaction>
        <text>L-glutamate + acetyl-CoA = N-acetyl-L-glutamate + CoA + H(+)</text>
        <dbReference type="Rhea" id="RHEA:24292"/>
        <dbReference type="ChEBI" id="CHEBI:15378"/>
        <dbReference type="ChEBI" id="CHEBI:29985"/>
        <dbReference type="ChEBI" id="CHEBI:44337"/>
        <dbReference type="ChEBI" id="CHEBI:57287"/>
        <dbReference type="ChEBI" id="CHEBI:57288"/>
        <dbReference type="EC" id="2.3.1.1"/>
    </reaction>
</comment>
<comment type="pathway">
    <text>Amino-acid biosynthesis; L-arginine biosynthesis; N(2)-acetyl-L-ornithine from L-glutamate: step 1/4.</text>
</comment>
<comment type="subcellular location">
    <subcellularLocation>
        <location evidence="1">Mitochondrion</location>
    </subcellularLocation>
</comment>
<comment type="similarity">
    <text evidence="5">Belongs to the acetyltransferase family.</text>
</comment>
<gene>
    <name type="primary">arg2</name>
    <name type="ORF">AFUB_027240</name>
</gene>
<organism>
    <name type="scientific">Aspergillus fumigatus (strain CBS 144.89 / FGSC A1163 / CEA10)</name>
    <name type="common">Neosartorya fumigata</name>
    <dbReference type="NCBI Taxonomy" id="451804"/>
    <lineage>
        <taxon>Eukaryota</taxon>
        <taxon>Fungi</taxon>
        <taxon>Dikarya</taxon>
        <taxon>Ascomycota</taxon>
        <taxon>Pezizomycotina</taxon>
        <taxon>Eurotiomycetes</taxon>
        <taxon>Eurotiomycetidae</taxon>
        <taxon>Eurotiales</taxon>
        <taxon>Aspergillaceae</taxon>
        <taxon>Aspergillus</taxon>
        <taxon>Aspergillus subgen. Fumigati</taxon>
    </lineage>
</organism>
<evidence type="ECO:0000250" key="1"/>
<evidence type="ECO:0000255" key="2"/>
<evidence type="ECO:0000255" key="3">
    <source>
        <dbReference type="PROSITE-ProRule" id="PRU00532"/>
    </source>
</evidence>
<evidence type="ECO:0000256" key="4">
    <source>
        <dbReference type="SAM" id="MobiDB-lite"/>
    </source>
</evidence>
<evidence type="ECO:0000305" key="5"/>
<dbReference type="EC" id="2.3.1.1"/>
<dbReference type="EMBL" id="DS499595">
    <property type="protein sequence ID" value="EDP54664.1"/>
    <property type="molecule type" value="Genomic_DNA"/>
</dbReference>
<dbReference type="SMR" id="B0XSH8"/>
<dbReference type="EnsemblFungi" id="EDP54664">
    <property type="protein sequence ID" value="EDP54664"/>
    <property type="gene ID" value="AFUB_027240"/>
</dbReference>
<dbReference type="VEuPathDB" id="FungiDB:AFUB_027240"/>
<dbReference type="HOGENOM" id="CLU_013088_0_0_1"/>
<dbReference type="OrthoDB" id="37263at5052"/>
<dbReference type="PhylomeDB" id="B0XSH8"/>
<dbReference type="UniPathway" id="UPA00068">
    <property type="reaction ID" value="UER00106"/>
</dbReference>
<dbReference type="Proteomes" id="UP000001699">
    <property type="component" value="Unassembled WGS sequence"/>
</dbReference>
<dbReference type="GO" id="GO:0005759">
    <property type="term" value="C:mitochondrial matrix"/>
    <property type="evidence" value="ECO:0007669"/>
    <property type="project" value="TreeGrafter"/>
</dbReference>
<dbReference type="GO" id="GO:0004042">
    <property type="term" value="F:L-glutamate N-acetyltransferase activity"/>
    <property type="evidence" value="ECO:0007669"/>
    <property type="project" value="InterPro"/>
</dbReference>
<dbReference type="GO" id="GO:0006526">
    <property type="term" value="P:L-arginine biosynthetic process"/>
    <property type="evidence" value="ECO:0007669"/>
    <property type="project" value="UniProtKB-UniPathway"/>
</dbReference>
<dbReference type="GO" id="GO:0006592">
    <property type="term" value="P:ornithine biosynthetic process"/>
    <property type="evidence" value="ECO:0007669"/>
    <property type="project" value="TreeGrafter"/>
</dbReference>
<dbReference type="FunFam" id="3.40.630.30:FF:000049">
    <property type="entry name" value="Amino-acid acetyltransferase, mitochondrial"/>
    <property type="match status" value="1"/>
</dbReference>
<dbReference type="Gene3D" id="3.40.630.30">
    <property type="match status" value="1"/>
</dbReference>
<dbReference type="InterPro" id="IPR011190">
    <property type="entry name" value="GlcNAc_Synth_fun"/>
</dbReference>
<dbReference type="InterPro" id="IPR006855">
    <property type="entry name" value="Vertebrate-like_GNAT_dom"/>
</dbReference>
<dbReference type="PANTHER" id="PTHR23342:SF4">
    <property type="entry name" value="AMINO-ACID ACETYLTRANSFERASE, MITOCHONDRIAL"/>
    <property type="match status" value="1"/>
</dbReference>
<dbReference type="PANTHER" id="PTHR23342">
    <property type="entry name" value="N-ACETYLGLUTAMATE SYNTHASE"/>
    <property type="match status" value="1"/>
</dbReference>
<dbReference type="Pfam" id="PF04768">
    <property type="entry name" value="NAT"/>
    <property type="match status" value="1"/>
</dbReference>
<dbReference type="PIRSF" id="PIRSF007892">
    <property type="entry name" value="NAGS_fungal"/>
    <property type="match status" value="1"/>
</dbReference>
<dbReference type="PROSITE" id="PS51731">
    <property type="entry name" value="GNAT_NAGS"/>
    <property type="match status" value="1"/>
</dbReference>
<reference key="1">
    <citation type="journal article" date="2008" name="PLoS Genet.">
        <title>Genomic islands in the pathogenic filamentous fungus Aspergillus fumigatus.</title>
        <authorList>
            <person name="Fedorova N.D."/>
            <person name="Khaldi N."/>
            <person name="Joardar V.S."/>
            <person name="Maiti R."/>
            <person name="Amedeo P."/>
            <person name="Anderson M.J."/>
            <person name="Crabtree J."/>
            <person name="Silva J.C."/>
            <person name="Badger J.H."/>
            <person name="Albarraq A."/>
            <person name="Angiuoli S."/>
            <person name="Bussey H."/>
            <person name="Bowyer P."/>
            <person name="Cotty P.J."/>
            <person name="Dyer P.S."/>
            <person name="Egan A."/>
            <person name="Galens K."/>
            <person name="Fraser-Liggett C.M."/>
            <person name="Haas B.J."/>
            <person name="Inman J.M."/>
            <person name="Kent R."/>
            <person name="Lemieux S."/>
            <person name="Malavazi I."/>
            <person name="Orvis J."/>
            <person name="Roemer T."/>
            <person name="Ronning C.M."/>
            <person name="Sundaram J.P."/>
            <person name="Sutton G."/>
            <person name="Turner G."/>
            <person name="Venter J.C."/>
            <person name="White O.R."/>
            <person name="Whitty B.R."/>
            <person name="Youngman P."/>
            <person name="Wolfe K.H."/>
            <person name="Goldman G.H."/>
            <person name="Wortman J.R."/>
            <person name="Jiang B."/>
            <person name="Denning D.W."/>
            <person name="Nierman W.C."/>
        </authorList>
    </citation>
    <scope>NUCLEOTIDE SEQUENCE [LARGE SCALE GENOMIC DNA]</scope>
    <source>
        <strain>CBS 144.89 / FGSC A1163 / CEA10</strain>
    </source>
</reference>
<name>NAGS_ASPFC</name>
<feature type="transit peptide" description="Mitochondrion" evidence="2">
    <location>
        <begin position="1"/>
        <end position="44"/>
    </location>
</feature>
<feature type="chain" id="PRO_0000372550" description="Amino-acid acetyltransferase, mitochondrial">
    <location>
        <begin position="45"/>
        <end position="716"/>
    </location>
</feature>
<feature type="domain" description="N-acetyltransferase" evidence="3">
    <location>
        <begin position="537"/>
        <end position="706"/>
    </location>
</feature>
<feature type="region of interest" description="Disordered" evidence="4">
    <location>
        <begin position="37"/>
        <end position="58"/>
    </location>
</feature>
<feature type="region of interest" description="Disordered" evidence="4">
    <location>
        <begin position="96"/>
        <end position="121"/>
    </location>
</feature>
<feature type="compositionally biased region" description="Polar residues" evidence="4">
    <location>
        <begin position="37"/>
        <end position="56"/>
    </location>
</feature>
<feature type="compositionally biased region" description="Basic and acidic residues" evidence="4">
    <location>
        <begin position="101"/>
        <end position="112"/>
    </location>
</feature>
<proteinExistence type="inferred from homology"/>
<sequence>MSLHTGWPRTVNSSFLKKHRSSLCTCQHTSSVLPRSFSTTPDRHVQQSADFSSTSRSYDRLGRRAREKLLDREFFLSLLSSATTKREAKSYLARLKAQHPKSPDANKPEPEKSATAPTLPSGVNLGSFYGASRSVYESPVFRQGPSPSAPPSLEPVERLHLALVRLSTPQSLDDNIIDGVAKTLSQLNRLGLTCCVVVDPGTEGVASALRQVAIEQADRLAVAIQKQPDSKSLRLDSVFSIDPSRPGLPQVFSRKALLNPLRHGHTVILTPIAYTEDVPRAIIVPANDAVIALTKELAGLASIPDPDEDPMVTAERIGRLQKEVSLDRVILLDPLGGIPAFNRRQPSHVFINMEQEYDDIENELLQAREMVPATETSLLKAGPNSVADNNPISKFVHAEVVPVPSGSTPELKTAVPQRSAIEGHLENLRVAQKALAMLPAASSGIITSPFEVASSAQTSPTSEFSAVGTRRQRNPLIHNLLTDKPLLSSSLPMSRRGPTNNGQGAVYPVTSHTTFVKRGMPLTMLPNPWTEPWTPQSRPRLKLDDPSIDLPRLVHLIEDSFDRKLDVQDYLNRVNDRLAGLIIAGEYEGGAILTWELPPGVEDDGSEASNARMVPYLDKFAVLKRSQGAGGVADIVFNAMVRSCFPNGVCWRSRKNNPVNKWYFERSLGTWKLSDTNWTMFWTTPGLVEDSQKFRDYEAVCRSIQPSWADDTGVVD</sequence>
<accession>B0XSH8</accession>
<protein>
    <recommendedName>
        <fullName>Amino-acid acetyltransferase, mitochondrial</fullName>
        <ecNumber>2.3.1.1</ecNumber>
    </recommendedName>
    <alternativeName>
        <fullName>Arginine-requiring protein 2</fullName>
    </alternativeName>
    <alternativeName>
        <fullName>Glutamate N-acetyltransferase</fullName>
    </alternativeName>
    <alternativeName>
        <fullName>N-acetylglutamate synthase</fullName>
        <shortName>AGS</shortName>
        <shortName>NAGS</shortName>
    </alternativeName>
</protein>
<keyword id="KW-0012">Acyltransferase</keyword>
<keyword id="KW-0028">Amino-acid biosynthesis</keyword>
<keyword id="KW-0496">Mitochondrion</keyword>
<keyword id="KW-0808">Transferase</keyword>
<keyword id="KW-0809">Transit peptide</keyword>